<accession>Q8FAM7</accession>
<comment type="function">
    <text evidence="1">Involved in resistance toward heavy metals.</text>
</comment>
<comment type="cofactor">
    <cofactor evidence="1">
        <name>Cu cation</name>
        <dbReference type="ChEBI" id="CHEBI:23378"/>
    </cofactor>
    <text evidence="1">Binds 1 copper ion per subunit.</text>
</comment>
<comment type="subunit">
    <text evidence="1">Homotrimer.</text>
</comment>
<comment type="subcellular location">
    <subcellularLocation>
        <location evidence="1">Cytoplasm</location>
    </subcellularLocation>
</comment>
<comment type="similarity">
    <text evidence="1">Belongs to the CutA family.</text>
</comment>
<comment type="sequence caution" evidence="2">
    <conflict type="erroneous initiation">
        <sequence resource="EMBL-CDS" id="AAN83641"/>
    </conflict>
</comment>
<organism>
    <name type="scientific">Escherichia coli O6:H1 (strain CFT073 / ATCC 700928 / UPEC)</name>
    <dbReference type="NCBI Taxonomy" id="199310"/>
    <lineage>
        <taxon>Bacteria</taxon>
        <taxon>Pseudomonadati</taxon>
        <taxon>Pseudomonadota</taxon>
        <taxon>Gammaproteobacteria</taxon>
        <taxon>Enterobacterales</taxon>
        <taxon>Enterobacteriaceae</taxon>
        <taxon>Escherichia</taxon>
    </lineage>
</organism>
<reference key="1">
    <citation type="journal article" date="2002" name="Proc. Natl. Acad. Sci. U.S.A.">
        <title>Extensive mosaic structure revealed by the complete genome sequence of uropathogenic Escherichia coli.</title>
        <authorList>
            <person name="Welch R.A."/>
            <person name="Burland V."/>
            <person name="Plunkett G. III"/>
            <person name="Redford P."/>
            <person name="Roesch P."/>
            <person name="Rasko D."/>
            <person name="Buckles E.L."/>
            <person name="Liou S.-R."/>
            <person name="Boutin A."/>
            <person name="Hackett J."/>
            <person name="Stroud D."/>
            <person name="Mayhew G.F."/>
            <person name="Rose D.J."/>
            <person name="Zhou S."/>
            <person name="Schwartz D.C."/>
            <person name="Perna N.T."/>
            <person name="Mobley H.L.T."/>
            <person name="Donnenberg M.S."/>
            <person name="Blattner F.R."/>
        </authorList>
    </citation>
    <scope>NUCLEOTIDE SEQUENCE [LARGE SCALE GENOMIC DNA]</scope>
    <source>
        <strain>CFT073 / ATCC 700928 / UPEC</strain>
    </source>
</reference>
<sequence length="112" mass="12361">MLDEKSSNTTSVVVLCTAPDEATAQDLAAKVLAEKLAACATLIPGATSLYYWEGKLEQEYEVQMILKTTVSHQQALLECLKSHHPYQTPELLVLPVTHGDTDYLSWLNASLR</sequence>
<name>CUTA_ECOL6</name>
<evidence type="ECO:0000255" key="1">
    <source>
        <dbReference type="HAMAP-Rule" id="MF_01160"/>
    </source>
</evidence>
<evidence type="ECO:0000305" key="2"/>
<gene>
    <name evidence="1" type="primary">cutA</name>
    <name type="ordered locus">c5219</name>
</gene>
<proteinExistence type="inferred from homology"/>
<feature type="chain" id="PRO_0000157119" description="Divalent-cation tolerance protein CutA">
    <location>
        <begin position="1"/>
        <end position="112"/>
    </location>
</feature>
<feature type="binding site" evidence="1">
    <location>
        <position position="16"/>
    </location>
    <ligand>
        <name>Cu cation</name>
        <dbReference type="ChEBI" id="CHEBI:23378"/>
    </ligand>
</feature>
<feature type="binding site" evidence="1">
    <location>
        <position position="83"/>
    </location>
    <ligand>
        <name>Cu cation</name>
        <dbReference type="ChEBI" id="CHEBI:23378"/>
    </ligand>
</feature>
<feature type="binding site" evidence="1">
    <location>
        <position position="84"/>
    </location>
    <ligand>
        <name>Cu cation</name>
        <dbReference type="ChEBI" id="CHEBI:23378"/>
    </ligand>
</feature>
<protein>
    <recommendedName>
        <fullName evidence="1">Divalent-cation tolerance protein CutA</fullName>
    </recommendedName>
</protein>
<keyword id="KW-0186">Copper</keyword>
<keyword id="KW-0963">Cytoplasm</keyword>
<keyword id="KW-0479">Metal-binding</keyword>
<keyword id="KW-1185">Reference proteome</keyword>
<dbReference type="EMBL" id="AE014075">
    <property type="protein sequence ID" value="AAN83641.1"/>
    <property type="status" value="ALT_INIT"/>
    <property type="molecule type" value="Genomic_DNA"/>
</dbReference>
<dbReference type="RefSeq" id="WP_000883409.1">
    <property type="nucleotide sequence ID" value="NZ_CP051263.1"/>
</dbReference>
<dbReference type="SMR" id="Q8FAM7"/>
<dbReference type="STRING" id="199310.c5219"/>
<dbReference type="KEGG" id="ecc:c5219"/>
<dbReference type="eggNOG" id="COG1324">
    <property type="taxonomic scope" value="Bacteria"/>
</dbReference>
<dbReference type="HOGENOM" id="CLU_098807_3_0_6"/>
<dbReference type="Proteomes" id="UP000001410">
    <property type="component" value="Chromosome"/>
</dbReference>
<dbReference type="GO" id="GO:0005737">
    <property type="term" value="C:cytoplasm"/>
    <property type="evidence" value="ECO:0007669"/>
    <property type="project" value="UniProtKB-SubCell"/>
</dbReference>
<dbReference type="GO" id="GO:0005507">
    <property type="term" value="F:copper ion binding"/>
    <property type="evidence" value="ECO:0007669"/>
    <property type="project" value="UniProtKB-UniRule"/>
</dbReference>
<dbReference type="GO" id="GO:0010038">
    <property type="term" value="P:response to metal ion"/>
    <property type="evidence" value="ECO:0007669"/>
    <property type="project" value="InterPro"/>
</dbReference>
<dbReference type="FunFam" id="3.30.70.120:FF:000004">
    <property type="entry name" value="Divalent-cation tolerance protein CutA"/>
    <property type="match status" value="1"/>
</dbReference>
<dbReference type="Gene3D" id="3.30.70.120">
    <property type="match status" value="1"/>
</dbReference>
<dbReference type="HAMAP" id="MF_01160">
    <property type="entry name" value="CutA"/>
    <property type="match status" value="1"/>
</dbReference>
<dbReference type="InterPro" id="IPR023700">
    <property type="entry name" value="CutA_Enterobact"/>
</dbReference>
<dbReference type="InterPro" id="IPR004323">
    <property type="entry name" value="Ion_tolerance_CutA"/>
</dbReference>
<dbReference type="InterPro" id="IPR011322">
    <property type="entry name" value="N-reg_PII-like_a/b"/>
</dbReference>
<dbReference type="InterPro" id="IPR015867">
    <property type="entry name" value="N-reg_PII/ATP_PRibTrfase_C"/>
</dbReference>
<dbReference type="NCBIfam" id="NF007930">
    <property type="entry name" value="PRK10645.1"/>
    <property type="match status" value="1"/>
</dbReference>
<dbReference type="PANTHER" id="PTHR23419">
    <property type="entry name" value="DIVALENT CATION TOLERANCE CUTA-RELATED"/>
    <property type="match status" value="1"/>
</dbReference>
<dbReference type="PANTHER" id="PTHR23419:SF8">
    <property type="entry name" value="FI09726P"/>
    <property type="match status" value="1"/>
</dbReference>
<dbReference type="Pfam" id="PF03091">
    <property type="entry name" value="CutA1"/>
    <property type="match status" value="1"/>
</dbReference>
<dbReference type="SUPFAM" id="SSF54913">
    <property type="entry name" value="GlnB-like"/>
    <property type="match status" value="1"/>
</dbReference>